<evidence type="ECO:0000250" key="1"/>
<evidence type="ECO:0000250" key="2">
    <source>
        <dbReference type="UniProtKB" id="P61851"/>
    </source>
</evidence>
<evidence type="ECO:0000305" key="3"/>
<protein>
    <recommendedName>
        <fullName evidence="2">Superoxide dismutase [Cu-Zn]</fullName>
        <ecNumber>1.15.1.1</ecNumber>
    </recommendedName>
    <alternativeName>
        <fullName evidence="2">Superoxide dismutase 1</fullName>
    </alternativeName>
</protein>
<organism>
    <name type="scientific">Drosophila sechellia</name>
    <name type="common">Fruit fly</name>
    <dbReference type="NCBI Taxonomy" id="7238"/>
    <lineage>
        <taxon>Eukaryota</taxon>
        <taxon>Metazoa</taxon>
        <taxon>Ecdysozoa</taxon>
        <taxon>Arthropoda</taxon>
        <taxon>Hexapoda</taxon>
        <taxon>Insecta</taxon>
        <taxon>Pterygota</taxon>
        <taxon>Neoptera</taxon>
        <taxon>Endopterygota</taxon>
        <taxon>Diptera</taxon>
        <taxon>Brachycera</taxon>
        <taxon>Muscomorpha</taxon>
        <taxon>Ephydroidea</taxon>
        <taxon>Drosophilidae</taxon>
        <taxon>Drosophila</taxon>
        <taxon>Sophophora</taxon>
    </lineage>
</organism>
<sequence>MVVKAVCVINGDAKGTVFFEQESSGTPVKVSGEVCGLAKGLHGFHVHEFGDNTNGCMSSGPHFNPYGKEHGAPVDENRHLGDLGNIEATGDCPTKVNITDSKITLFGADSIIGRTVVVHADADDLGQGGHELSKSTGNAGARIGCGVIGIAKV</sequence>
<name>SODC_DROSE</name>
<reference key="1">
    <citation type="submission" date="1999-02" db="EMBL/GenBank/DDBJ databases">
        <title>Phylogenetic analysis of Drosophila melanogaster group based on Cu-Zn superoxide dismutase gene sequences.</title>
        <authorList>
            <person name="Arxontaki K."/>
            <person name="Kastanis P."/>
            <person name="Tsakas S."/>
            <person name="Loukas M."/>
            <person name="Eliopoulos E."/>
        </authorList>
    </citation>
    <scope>NUCLEOTIDE SEQUENCE [GENOMIC DNA]</scope>
</reference>
<reference key="2">
    <citation type="journal article" date="2007" name="Nature">
        <title>Evolution of genes and genomes on the Drosophila phylogeny.</title>
        <authorList>
            <consortium name="Drosophila 12 genomes consortium"/>
        </authorList>
    </citation>
    <scope>NUCLEOTIDE SEQUENCE [LARGE SCALE GENOMIC DNA]</scope>
    <source>
        <strain>Rob3c / Tucson 14021-0248.25</strain>
    </source>
</reference>
<comment type="function">
    <text>Destroys radicals which are normally produced within the cells and which are toxic to biological systems.</text>
</comment>
<comment type="catalytic activity">
    <reaction>
        <text>2 superoxide + 2 H(+) = H2O2 + O2</text>
        <dbReference type="Rhea" id="RHEA:20696"/>
        <dbReference type="ChEBI" id="CHEBI:15378"/>
        <dbReference type="ChEBI" id="CHEBI:15379"/>
        <dbReference type="ChEBI" id="CHEBI:16240"/>
        <dbReference type="ChEBI" id="CHEBI:18421"/>
        <dbReference type="EC" id="1.15.1.1"/>
    </reaction>
</comment>
<comment type="cofactor">
    <cofactor>
        <name>Cu cation</name>
        <dbReference type="ChEBI" id="CHEBI:23378"/>
    </cofactor>
    <text>Binds 1 copper ion per subunit.</text>
</comment>
<comment type="cofactor">
    <cofactor>
        <name>Zn(2+)</name>
        <dbReference type="ChEBI" id="CHEBI:29105"/>
    </cofactor>
    <text>Binds 1 zinc ion per subunit.</text>
</comment>
<comment type="subunit">
    <text evidence="1">Homodimer.</text>
</comment>
<comment type="subcellular location">
    <subcellularLocation>
        <location evidence="1">Cytoplasm</location>
    </subcellularLocation>
</comment>
<comment type="similarity">
    <text evidence="3">Belongs to the Cu-Zn superoxide dismutase family.</text>
</comment>
<proteinExistence type="inferred from homology"/>
<feature type="initiator methionine" description="Removed" evidence="1">
    <location>
        <position position="1"/>
    </location>
</feature>
<feature type="chain" id="PRO_0000164094" description="Superoxide dismutase [Cu-Zn]">
    <location>
        <begin position="2"/>
        <end position="153"/>
    </location>
</feature>
<feature type="binding site" evidence="1">
    <location>
        <position position="45"/>
    </location>
    <ligand>
        <name>Cu cation</name>
        <dbReference type="ChEBI" id="CHEBI:23378"/>
        <note>catalytic</note>
    </ligand>
</feature>
<feature type="binding site" evidence="1">
    <location>
        <position position="47"/>
    </location>
    <ligand>
        <name>Cu cation</name>
        <dbReference type="ChEBI" id="CHEBI:23378"/>
        <note>catalytic</note>
    </ligand>
</feature>
<feature type="binding site" evidence="1">
    <location>
        <position position="62"/>
    </location>
    <ligand>
        <name>Cu cation</name>
        <dbReference type="ChEBI" id="CHEBI:23378"/>
        <note>catalytic</note>
    </ligand>
</feature>
<feature type="binding site" evidence="1">
    <location>
        <position position="62"/>
    </location>
    <ligand>
        <name>Zn(2+)</name>
        <dbReference type="ChEBI" id="CHEBI:29105"/>
        <note>structural</note>
    </ligand>
</feature>
<feature type="binding site" evidence="1">
    <location>
        <position position="70"/>
    </location>
    <ligand>
        <name>Zn(2+)</name>
        <dbReference type="ChEBI" id="CHEBI:29105"/>
        <note>structural</note>
    </ligand>
</feature>
<feature type="binding site" evidence="1">
    <location>
        <position position="79"/>
    </location>
    <ligand>
        <name>Zn(2+)</name>
        <dbReference type="ChEBI" id="CHEBI:29105"/>
        <note>structural</note>
    </ligand>
</feature>
<feature type="binding site" evidence="1">
    <location>
        <position position="82"/>
    </location>
    <ligand>
        <name>Zn(2+)</name>
        <dbReference type="ChEBI" id="CHEBI:29105"/>
        <note>structural</note>
    </ligand>
</feature>
<feature type="binding site" evidence="1">
    <location>
        <position position="119"/>
    </location>
    <ligand>
        <name>Cu cation</name>
        <dbReference type="ChEBI" id="CHEBI:23378"/>
        <note>catalytic</note>
    </ligand>
</feature>
<feature type="disulfide bond" evidence="1">
    <location>
        <begin position="56"/>
        <end position="145"/>
    </location>
</feature>
<gene>
    <name evidence="2" type="primary">Sod1</name>
    <name evidence="2" type="synonym">Sod</name>
    <name type="ORF">GM24771</name>
</gene>
<dbReference type="EC" id="1.15.1.1"/>
<dbReference type="EMBL" id="AF127157">
    <property type="protein sequence ID" value="AAF23596.1"/>
    <property type="molecule type" value="Genomic_DNA"/>
</dbReference>
<dbReference type="EMBL" id="CH480815">
    <property type="protein sequence ID" value="EDW41055.1"/>
    <property type="molecule type" value="Genomic_DNA"/>
</dbReference>
<dbReference type="SMR" id="P61854"/>
<dbReference type="STRING" id="7238.P61854"/>
<dbReference type="EnsemblMetazoa" id="FBtr0207756">
    <property type="protein sequence ID" value="FBpp0206248"/>
    <property type="gene ID" value="FBgn0023627"/>
</dbReference>
<dbReference type="EnsemblMetazoa" id="XM_002030033.2">
    <property type="protein sequence ID" value="XP_002030069.1"/>
    <property type="gene ID" value="LOC6605231"/>
</dbReference>
<dbReference type="GeneID" id="6605231"/>
<dbReference type="KEGG" id="dse:6605231"/>
<dbReference type="CTD" id="6647"/>
<dbReference type="HOGENOM" id="CLU_056632_4_1_1"/>
<dbReference type="OMA" id="AQRGFHI"/>
<dbReference type="OrthoDB" id="4447at7215"/>
<dbReference type="PhylomeDB" id="P61854"/>
<dbReference type="Proteomes" id="UP000001292">
    <property type="component" value="Unassembled WGS sequence"/>
</dbReference>
<dbReference type="GO" id="GO:0005777">
    <property type="term" value="C:peroxisome"/>
    <property type="evidence" value="ECO:0007669"/>
    <property type="project" value="EnsemblMetazoa"/>
</dbReference>
<dbReference type="GO" id="GO:0005507">
    <property type="term" value="F:copper ion binding"/>
    <property type="evidence" value="ECO:0007669"/>
    <property type="project" value="InterPro"/>
</dbReference>
<dbReference type="GO" id="GO:0042803">
    <property type="term" value="F:protein homodimerization activity"/>
    <property type="evidence" value="ECO:0007669"/>
    <property type="project" value="EnsemblMetazoa"/>
</dbReference>
<dbReference type="GO" id="GO:0004784">
    <property type="term" value="F:superoxide dismutase activity"/>
    <property type="evidence" value="ECO:0007669"/>
    <property type="project" value="UniProtKB-EC"/>
</dbReference>
<dbReference type="GO" id="GO:0008340">
    <property type="term" value="P:determination of adult lifespan"/>
    <property type="evidence" value="ECO:0007669"/>
    <property type="project" value="EnsemblMetazoa"/>
</dbReference>
<dbReference type="GO" id="GO:1901526">
    <property type="term" value="P:positive regulation of mitophagy"/>
    <property type="evidence" value="ECO:0007669"/>
    <property type="project" value="EnsemblMetazoa"/>
</dbReference>
<dbReference type="GO" id="GO:0048167">
    <property type="term" value="P:regulation of synaptic plasticity"/>
    <property type="evidence" value="ECO:0007669"/>
    <property type="project" value="EnsemblMetazoa"/>
</dbReference>
<dbReference type="CDD" id="cd00305">
    <property type="entry name" value="Cu-Zn_Superoxide_Dismutase"/>
    <property type="match status" value="1"/>
</dbReference>
<dbReference type="FunFam" id="2.60.40.200:FF:000001">
    <property type="entry name" value="Superoxide dismutase [Cu-Zn]"/>
    <property type="match status" value="1"/>
</dbReference>
<dbReference type="Gene3D" id="2.60.40.200">
    <property type="entry name" value="Superoxide dismutase, copper/zinc binding domain"/>
    <property type="match status" value="1"/>
</dbReference>
<dbReference type="InterPro" id="IPR036423">
    <property type="entry name" value="SOD-like_Cu/Zn_dom_sf"/>
</dbReference>
<dbReference type="InterPro" id="IPR024134">
    <property type="entry name" value="SOD_Cu/Zn_/chaperone"/>
</dbReference>
<dbReference type="InterPro" id="IPR018152">
    <property type="entry name" value="SOD_Cu/Zn_BS"/>
</dbReference>
<dbReference type="InterPro" id="IPR001424">
    <property type="entry name" value="SOD_Cu_Zn_dom"/>
</dbReference>
<dbReference type="PANTHER" id="PTHR10003">
    <property type="entry name" value="SUPEROXIDE DISMUTASE CU-ZN -RELATED"/>
    <property type="match status" value="1"/>
</dbReference>
<dbReference type="Pfam" id="PF00080">
    <property type="entry name" value="Sod_Cu"/>
    <property type="match status" value="1"/>
</dbReference>
<dbReference type="PRINTS" id="PR00068">
    <property type="entry name" value="CUZNDISMTASE"/>
</dbReference>
<dbReference type="SUPFAM" id="SSF49329">
    <property type="entry name" value="Cu,Zn superoxide dismutase-like"/>
    <property type="match status" value="1"/>
</dbReference>
<dbReference type="PROSITE" id="PS00087">
    <property type="entry name" value="SOD_CU_ZN_1"/>
    <property type="match status" value="1"/>
</dbReference>
<dbReference type="PROSITE" id="PS00332">
    <property type="entry name" value="SOD_CU_ZN_2"/>
    <property type="match status" value="1"/>
</dbReference>
<keyword id="KW-0049">Antioxidant</keyword>
<keyword id="KW-0186">Copper</keyword>
<keyword id="KW-0963">Cytoplasm</keyword>
<keyword id="KW-1015">Disulfide bond</keyword>
<keyword id="KW-0479">Metal-binding</keyword>
<keyword id="KW-0560">Oxidoreductase</keyword>
<keyword id="KW-1185">Reference proteome</keyword>
<keyword id="KW-0862">Zinc</keyword>
<accession>P61854</accession>
<accession>B4HDW5</accession>
<accession>P00444</accession>
<accession>Q9VTF6</accession>